<feature type="chain" id="PRO_0000322272" description="Small ribosomal subunit protein uS4">
    <location>
        <begin position="1"/>
        <end position="207"/>
    </location>
</feature>
<feature type="domain" description="S4 RNA-binding" evidence="1">
    <location>
        <begin position="97"/>
        <end position="160"/>
    </location>
</feature>
<reference key="1">
    <citation type="journal article" date="2010" name="Genome Biol. Evol.">
        <title>Continuing evolution of Burkholderia mallei through genome reduction and large-scale rearrangements.</title>
        <authorList>
            <person name="Losada L."/>
            <person name="Ronning C.M."/>
            <person name="DeShazer D."/>
            <person name="Woods D."/>
            <person name="Fedorova N."/>
            <person name="Kim H.S."/>
            <person name="Shabalina S.A."/>
            <person name="Pearson T.R."/>
            <person name="Brinkac L."/>
            <person name="Tan P."/>
            <person name="Nandi T."/>
            <person name="Crabtree J."/>
            <person name="Badger J."/>
            <person name="Beckstrom-Sternberg S."/>
            <person name="Saqib M."/>
            <person name="Schutzer S.E."/>
            <person name="Keim P."/>
            <person name="Nierman W.C."/>
        </authorList>
    </citation>
    <scope>NUCLEOTIDE SEQUENCE [LARGE SCALE GENOMIC DNA]</scope>
    <source>
        <strain>NCTC 10229</strain>
    </source>
</reference>
<dbReference type="EMBL" id="CP000546">
    <property type="protein sequence ID" value="ABN02238.1"/>
    <property type="molecule type" value="Genomic_DNA"/>
</dbReference>
<dbReference type="RefSeq" id="WP_004197926.1">
    <property type="nucleotide sequence ID" value="NC_008836.1"/>
</dbReference>
<dbReference type="SMR" id="A2S7K1"/>
<dbReference type="GeneID" id="93061807"/>
<dbReference type="KEGG" id="bml:BMA10229_A1949"/>
<dbReference type="HOGENOM" id="CLU_092403_0_2_4"/>
<dbReference type="Proteomes" id="UP000002283">
    <property type="component" value="Chromosome I"/>
</dbReference>
<dbReference type="GO" id="GO:0015935">
    <property type="term" value="C:small ribosomal subunit"/>
    <property type="evidence" value="ECO:0007669"/>
    <property type="project" value="InterPro"/>
</dbReference>
<dbReference type="GO" id="GO:0019843">
    <property type="term" value="F:rRNA binding"/>
    <property type="evidence" value="ECO:0007669"/>
    <property type="project" value="UniProtKB-UniRule"/>
</dbReference>
<dbReference type="GO" id="GO:0003735">
    <property type="term" value="F:structural constituent of ribosome"/>
    <property type="evidence" value="ECO:0007669"/>
    <property type="project" value="InterPro"/>
</dbReference>
<dbReference type="GO" id="GO:0042274">
    <property type="term" value="P:ribosomal small subunit biogenesis"/>
    <property type="evidence" value="ECO:0007669"/>
    <property type="project" value="TreeGrafter"/>
</dbReference>
<dbReference type="GO" id="GO:0006412">
    <property type="term" value="P:translation"/>
    <property type="evidence" value="ECO:0007669"/>
    <property type="project" value="UniProtKB-UniRule"/>
</dbReference>
<dbReference type="CDD" id="cd00165">
    <property type="entry name" value="S4"/>
    <property type="match status" value="1"/>
</dbReference>
<dbReference type="FunFam" id="1.10.1050.10:FF:000001">
    <property type="entry name" value="30S ribosomal protein S4"/>
    <property type="match status" value="1"/>
</dbReference>
<dbReference type="FunFam" id="3.10.290.10:FF:000001">
    <property type="entry name" value="30S ribosomal protein S4"/>
    <property type="match status" value="1"/>
</dbReference>
<dbReference type="Gene3D" id="1.10.1050.10">
    <property type="entry name" value="Ribosomal Protein S4 Delta 41, Chain A, domain 1"/>
    <property type="match status" value="1"/>
</dbReference>
<dbReference type="Gene3D" id="3.10.290.10">
    <property type="entry name" value="RNA-binding S4 domain"/>
    <property type="match status" value="1"/>
</dbReference>
<dbReference type="HAMAP" id="MF_01306_B">
    <property type="entry name" value="Ribosomal_uS4_B"/>
    <property type="match status" value="1"/>
</dbReference>
<dbReference type="InterPro" id="IPR022801">
    <property type="entry name" value="Ribosomal_uS4"/>
</dbReference>
<dbReference type="InterPro" id="IPR005709">
    <property type="entry name" value="Ribosomal_uS4_bac-type"/>
</dbReference>
<dbReference type="InterPro" id="IPR018079">
    <property type="entry name" value="Ribosomal_uS4_CS"/>
</dbReference>
<dbReference type="InterPro" id="IPR001912">
    <property type="entry name" value="Ribosomal_uS4_N"/>
</dbReference>
<dbReference type="InterPro" id="IPR002942">
    <property type="entry name" value="S4_RNA-bd"/>
</dbReference>
<dbReference type="InterPro" id="IPR036986">
    <property type="entry name" value="S4_RNA-bd_sf"/>
</dbReference>
<dbReference type="NCBIfam" id="NF003717">
    <property type="entry name" value="PRK05327.1"/>
    <property type="match status" value="1"/>
</dbReference>
<dbReference type="NCBIfam" id="TIGR01017">
    <property type="entry name" value="rpsD_bact"/>
    <property type="match status" value="1"/>
</dbReference>
<dbReference type="PANTHER" id="PTHR11831">
    <property type="entry name" value="30S 40S RIBOSOMAL PROTEIN"/>
    <property type="match status" value="1"/>
</dbReference>
<dbReference type="PANTHER" id="PTHR11831:SF4">
    <property type="entry name" value="SMALL RIBOSOMAL SUBUNIT PROTEIN US4M"/>
    <property type="match status" value="1"/>
</dbReference>
<dbReference type="Pfam" id="PF00163">
    <property type="entry name" value="Ribosomal_S4"/>
    <property type="match status" value="1"/>
</dbReference>
<dbReference type="Pfam" id="PF01479">
    <property type="entry name" value="S4"/>
    <property type="match status" value="1"/>
</dbReference>
<dbReference type="SMART" id="SM01390">
    <property type="entry name" value="Ribosomal_S4"/>
    <property type="match status" value="1"/>
</dbReference>
<dbReference type="SMART" id="SM00363">
    <property type="entry name" value="S4"/>
    <property type="match status" value="1"/>
</dbReference>
<dbReference type="SUPFAM" id="SSF55174">
    <property type="entry name" value="Alpha-L RNA-binding motif"/>
    <property type="match status" value="1"/>
</dbReference>
<dbReference type="PROSITE" id="PS00632">
    <property type="entry name" value="RIBOSOMAL_S4"/>
    <property type="match status" value="1"/>
</dbReference>
<dbReference type="PROSITE" id="PS50889">
    <property type="entry name" value="S4"/>
    <property type="match status" value="1"/>
</dbReference>
<keyword id="KW-0687">Ribonucleoprotein</keyword>
<keyword id="KW-0689">Ribosomal protein</keyword>
<keyword id="KW-0694">RNA-binding</keyword>
<keyword id="KW-0699">rRNA-binding</keyword>
<organism>
    <name type="scientific">Burkholderia mallei (strain NCTC 10229)</name>
    <dbReference type="NCBI Taxonomy" id="412022"/>
    <lineage>
        <taxon>Bacteria</taxon>
        <taxon>Pseudomonadati</taxon>
        <taxon>Pseudomonadota</taxon>
        <taxon>Betaproteobacteria</taxon>
        <taxon>Burkholderiales</taxon>
        <taxon>Burkholderiaceae</taxon>
        <taxon>Burkholderia</taxon>
        <taxon>pseudomallei group</taxon>
    </lineage>
</organism>
<proteinExistence type="inferred from homology"/>
<accession>A2S7K1</accession>
<name>RS4_BURM9</name>
<evidence type="ECO:0000255" key="1">
    <source>
        <dbReference type="HAMAP-Rule" id="MF_01306"/>
    </source>
</evidence>
<evidence type="ECO:0000305" key="2"/>
<gene>
    <name evidence="1" type="primary">rpsD</name>
    <name type="ordered locus">BMA10229_A1949</name>
</gene>
<sequence length="207" mass="23151">MARYIGPKAKLSRREGTDLFLKSARRSLADKCKLDSKPGQHGRISGARTSDYGTQLREKQKVKRIYGVLERQFRRYFAEADRRKGNTGETLLQLLESRLDNVVYRMGFGSTRAEARQLVSHKAITVNGIVANIPSQQVKAGDVVAIREKAKKQARIVEALSLAEQGGMPSWVAVDAKKFEGTFKQVPERADIAGDINESLIVELYSR</sequence>
<comment type="function">
    <text evidence="1">One of the primary rRNA binding proteins, it binds directly to 16S rRNA where it nucleates assembly of the body of the 30S subunit.</text>
</comment>
<comment type="function">
    <text evidence="1">With S5 and S12 plays an important role in translational accuracy.</text>
</comment>
<comment type="subunit">
    <text evidence="1">Part of the 30S ribosomal subunit. Contacts protein S5. The interaction surface between S4 and S5 is involved in control of translational fidelity.</text>
</comment>
<comment type="similarity">
    <text evidence="1">Belongs to the universal ribosomal protein uS4 family.</text>
</comment>
<protein>
    <recommendedName>
        <fullName evidence="1">Small ribosomal subunit protein uS4</fullName>
    </recommendedName>
    <alternativeName>
        <fullName evidence="2">30S ribosomal protein S4</fullName>
    </alternativeName>
</protein>